<evidence type="ECO:0000255" key="1">
    <source>
        <dbReference type="HAMAP-Rule" id="MF_01547"/>
    </source>
</evidence>
<dbReference type="EC" id="2.1.1.166" evidence="1"/>
<dbReference type="EMBL" id="AM260479">
    <property type="protein sequence ID" value="CAJ93537.1"/>
    <property type="molecule type" value="Genomic_DNA"/>
</dbReference>
<dbReference type="RefSeq" id="WP_010814316.1">
    <property type="nucleotide sequence ID" value="NZ_CP039287.1"/>
</dbReference>
<dbReference type="SMR" id="Q0K8Y4"/>
<dbReference type="STRING" id="381666.H16_A2448"/>
<dbReference type="KEGG" id="reh:H16_A2448"/>
<dbReference type="eggNOG" id="COG0293">
    <property type="taxonomic scope" value="Bacteria"/>
</dbReference>
<dbReference type="HOGENOM" id="CLU_009422_4_1_4"/>
<dbReference type="OrthoDB" id="9790080at2"/>
<dbReference type="Proteomes" id="UP000008210">
    <property type="component" value="Chromosome 1"/>
</dbReference>
<dbReference type="GO" id="GO:0005737">
    <property type="term" value="C:cytoplasm"/>
    <property type="evidence" value="ECO:0007669"/>
    <property type="project" value="UniProtKB-SubCell"/>
</dbReference>
<dbReference type="GO" id="GO:0008650">
    <property type="term" value="F:rRNA (uridine-2'-O-)-methyltransferase activity"/>
    <property type="evidence" value="ECO:0007669"/>
    <property type="project" value="UniProtKB-UniRule"/>
</dbReference>
<dbReference type="FunFam" id="3.40.50.150:FF:000005">
    <property type="entry name" value="Ribosomal RNA large subunit methyltransferase E"/>
    <property type="match status" value="1"/>
</dbReference>
<dbReference type="Gene3D" id="3.40.50.150">
    <property type="entry name" value="Vaccinia Virus protein VP39"/>
    <property type="match status" value="1"/>
</dbReference>
<dbReference type="HAMAP" id="MF_01547">
    <property type="entry name" value="RNA_methyltr_E"/>
    <property type="match status" value="1"/>
</dbReference>
<dbReference type="InterPro" id="IPR050082">
    <property type="entry name" value="RNA_methyltr_RlmE"/>
</dbReference>
<dbReference type="InterPro" id="IPR002877">
    <property type="entry name" value="RNA_MeTrfase_FtsJ_dom"/>
</dbReference>
<dbReference type="InterPro" id="IPR015507">
    <property type="entry name" value="rRNA-MeTfrase_E"/>
</dbReference>
<dbReference type="InterPro" id="IPR029063">
    <property type="entry name" value="SAM-dependent_MTases_sf"/>
</dbReference>
<dbReference type="PANTHER" id="PTHR10920">
    <property type="entry name" value="RIBOSOMAL RNA METHYLTRANSFERASE"/>
    <property type="match status" value="1"/>
</dbReference>
<dbReference type="PANTHER" id="PTHR10920:SF18">
    <property type="entry name" value="RRNA METHYLTRANSFERASE 2, MITOCHONDRIAL"/>
    <property type="match status" value="1"/>
</dbReference>
<dbReference type="Pfam" id="PF01728">
    <property type="entry name" value="FtsJ"/>
    <property type="match status" value="1"/>
</dbReference>
<dbReference type="PIRSF" id="PIRSF005461">
    <property type="entry name" value="23S_rRNA_mtase"/>
    <property type="match status" value="1"/>
</dbReference>
<dbReference type="SUPFAM" id="SSF53335">
    <property type="entry name" value="S-adenosyl-L-methionine-dependent methyltransferases"/>
    <property type="match status" value="1"/>
</dbReference>
<sequence>MAKNKFNHSWLHDHINDPYVKMAQREGYRARAAYKLKEIDEQDKLIRPGQVIVDLGAAPGSWSQYARNKLADSPRAKDGRIDGAVVAIDLLPMEPVADVTFIQGDFREESVFRELESVVLDASGGNKIDLVLSDMAPNLSGVAFADAARIEYLCDLALEFAQAHLKPEGALLVKCFHGSGYSQIVEKFKRHFKVVAKRKPKASRDKSSETFILGRYLKAVD</sequence>
<reference key="1">
    <citation type="journal article" date="2006" name="Nat. Biotechnol.">
        <title>Genome sequence of the bioplastic-producing 'Knallgas' bacterium Ralstonia eutropha H16.</title>
        <authorList>
            <person name="Pohlmann A."/>
            <person name="Fricke W.F."/>
            <person name="Reinecke F."/>
            <person name="Kusian B."/>
            <person name="Liesegang H."/>
            <person name="Cramm R."/>
            <person name="Eitinger T."/>
            <person name="Ewering C."/>
            <person name="Poetter M."/>
            <person name="Schwartz E."/>
            <person name="Strittmatter A."/>
            <person name="Voss I."/>
            <person name="Gottschalk G."/>
            <person name="Steinbuechel A."/>
            <person name="Friedrich B."/>
            <person name="Bowien B."/>
        </authorList>
    </citation>
    <scope>NUCLEOTIDE SEQUENCE [LARGE SCALE GENOMIC DNA]</scope>
    <source>
        <strain>ATCC 17699 / DSM 428 / KCTC 22496 / NCIMB 10442 / H16 / Stanier 337</strain>
    </source>
</reference>
<keyword id="KW-0963">Cytoplasm</keyword>
<keyword id="KW-0489">Methyltransferase</keyword>
<keyword id="KW-1185">Reference proteome</keyword>
<keyword id="KW-0698">rRNA processing</keyword>
<keyword id="KW-0949">S-adenosyl-L-methionine</keyword>
<keyword id="KW-0808">Transferase</keyword>
<name>RLME_CUPNH</name>
<gene>
    <name evidence="1" type="primary">rlmE</name>
    <name evidence="1" type="synonym">ftsJ</name>
    <name evidence="1" type="synonym">rrmJ</name>
    <name type="ordered locus">H16_A2448</name>
</gene>
<organism>
    <name type="scientific">Cupriavidus necator (strain ATCC 17699 / DSM 428 / KCTC 22496 / NCIMB 10442 / H16 / Stanier 337)</name>
    <name type="common">Ralstonia eutropha</name>
    <dbReference type="NCBI Taxonomy" id="381666"/>
    <lineage>
        <taxon>Bacteria</taxon>
        <taxon>Pseudomonadati</taxon>
        <taxon>Pseudomonadota</taxon>
        <taxon>Betaproteobacteria</taxon>
        <taxon>Burkholderiales</taxon>
        <taxon>Burkholderiaceae</taxon>
        <taxon>Cupriavidus</taxon>
    </lineage>
</organism>
<accession>Q0K8Y4</accession>
<protein>
    <recommendedName>
        <fullName evidence="1">Ribosomal RNA large subunit methyltransferase E</fullName>
        <ecNumber evidence="1">2.1.1.166</ecNumber>
    </recommendedName>
    <alternativeName>
        <fullName evidence="1">23S rRNA Um2552 methyltransferase</fullName>
    </alternativeName>
    <alternativeName>
        <fullName evidence="1">rRNA (uridine-2'-O-)-methyltransferase</fullName>
    </alternativeName>
</protein>
<feature type="chain" id="PRO_0000282780" description="Ribosomal RNA large subunit methyltransferase E">
    <location>
        <begin position="1"/>
        <end position="221"/>
    </location>
</feature>
<feature type="active site" description="Proton acceptor" evidence="1">
    <location>
        <position position="174"/>
    </location>
</feature>
<feature type="binding site" evidence="1">
    <location>
        <position position="60"/>
    </location>
    <ligand>
        <name>S-adenosyl-L-methionine</name>
        <dbReference type="ChEBI" id="CHEBI:59789"/>
    </ligand>
</feature>
<feature type="binding site" evidence="1">
    <location>
        <position position="62"/>
    </location>
    <ligand>
        <name>S-adenosyl-L-methionine</name>
        <dbReference type="ChEBI" id="CHEBI:59789"/>
    </ligand>
</feature>
<feature type="binding site" evidence="1">
    <location>
        <position position="89"/>
    </location>
    <ligand>
        <name>S-adenosyl-L-methionine</name>
        <dbReference type="ChEBI" id="CHEBI:59789"/>
    </ligand>
</feature>
<feature type="binding site" evidence="1">
    <location>
        <position position="105"/>
    </location>
    <ligand>
        <name>S-adenosyl-L-methionine</name>
        <dbReference type="ChEBI" id="CHEBI:59789"/>
    </ligand>
</feature>
<feature type="binding site" evidence="1">
    <location>
        <position position="134"/>
    </location>
    <ligand>
        <name>S-adenosyl-L-methionine</name>
        <dbReference type="ChEBI" id="CHEBI:59789"/>
    </ligand>
</feature>
<proteinExistence type="inferred from homology"/>
<comment type="function">
    <text evidence="1">Specifically methylates the uridine in position 2552 of 23S rRNA at the 2'-O position of the ribose in the fully assembled 50S ribosomal subunit.</text>
</comment>
<comment type="catalytic activity">
    <reaction evidence="1">
        <text>uridine(2552) in 23S rRNA + S-adenosyl-L-methionine = 2'-O-methyluridine(2552) in 23S rRNA + S-adenosyl-L-homocysteine + H(+)</text>
        <dbReference type="Rhea" id="RHEA:42720"/>
        <dbReference type="Rhea" id="RHEA-COMP:10202"/>
        <dbReference type="Rhea" id="RHEA-COMP:10203"/>
        <dbReference type="ChEBI" id="CHEBI:15378"/>
        <dbReference type="ChEBI" id="CHEBI:57856"/>
        <dbReference type="ChEBI" id="CHEBI:59789"/>
        <dbReference type="ChEBI" id="CHEBI:65315"/>
        <dbReference type="ChEBI" id="CHEBI:74478"/>
        <dbReference type="EC" id="2.1.1.166"/>
    </reaction>
</comment>
<comment type="subcellular location">
    <subcellularLocation>
        <location evidence="1">Cytoplasm</location>
    </subcellularLocation>
</comment>
<comment type="similarity">
    <text evidence="1">Belongs to the class I-like SAM-binding methyltransferase superfamily. RNA methyltransferase RlmE family.</text>
</comment>